<dbReference type="EMBL" id="AE017283">
    <property type="protein sequence ID" value="AAT83569.1"/>
    <property type="molecule type" value="Genomic_DNA"/>
</dbReference>
<dbReference type="RefSeq" id="WP_002514851.1">
    <property type="nucleotide sequence ID" value="NZ_CP025935.1"/>
</dbReference>
<dbReference type="PDB" id="8CRX">
    <property type="method" value="EM"/>
    <property type="resolution" value="2.78 A"/>
    <property type="chains" value="y=1-60"/>
</dbReference>
<dbReference type="PDB" id="8CVM">
    <property type="method" value="EM"/>
    <property type="resolution" value="2.66 A"/>
    <property type="chains" value="y=1-60"/>
</dbReference>
<dbReference type="PDBsum" id="8CRX"/>
<dbReference type="PDBsum" id="8CVM"/>
<dbReference type="SMR" id="Q6A6P4"/>
<dbReference type="EnsemblBacteria" id="AAT83569">
    <property type="protein sequence ID" value="AAT83569"/>
    <property type="gene ID" value="PPA1843"/>
</dbReference>
<dbReference type="GeneID" id="92857792"/>
<dbReference type="KEGG" id="pac:PPA1843"/>
<dbReference type="eggNOG" id="COG1841">
    <property type="taxonomic scope" value="Bacteria"/>
</dbReference>
<dbReference type="HOGENOM" id="CLU_131047_2_1_11"/>
<dbReference type="Proteomes" id="UP000000603">
    <property type="component" value="Chromosome"/>
</dbReference>
<dbReference type="GO" id="GO:0022625">
    <property type="term" value="C:cytosolic large ribosomal subunit"/>
    <property type="evidence" value="ECO:0007669"/>
    <property type="project" value="TreeGrafter"/>
</dbReference>
<dbReference type="GO" id="GO:0003735">
    <property type="term" value="F:structural constituent of ribosome"/>
    <property type="evidence" value="ECO:0007669"/>
    <property type="project" value="InterPro"/>
</dbReference>
<dbReference type="GO" id="GO:0006412">
    <property type="term" value="P:translation"/>
    <property type="evidence" value="ECO:0007669"/>
    <property type="project" value="UniProtKB-UniRule"/>
</dbReference>
<dbReference type="CDD" id="cd01658">
    <property type="entry name" value="Ribosomal_L30"/>
    <property type="match status" value="1"/>
</dbReference>
<dbReference type="FunFam" id="3.30.1390.20:FF:000001">
    <property type="entry name" value="50S ribosomal protein L30"/>
    <property type="match status" value="1"/>
</dbReference>
<dbReference type="Gene3D" id="3.30.1390.20">
    <property type="entry name" value="Ribosomal protein L30, ferredoxin-like fold domain"/>
    <property type="match status" value="1"/>
</dbReference>
<dbReference type="HAMAP" id="MF_01371_B">
    <property type="entry name" value="Ribosomal_uL30_B"/>
    <property type="match status" value="1"/>
</dbReference>
<dbReference type="InterPro" id="IPR036919">
    <property type="entry name" value="Ribo_uL30_ferredoxin-like_sf"/>
</dbReference>
<dbReference type="InterPro" id="IPR005996">
    <property type="entry name" value="Ribosomal_uL30_bac-type"/>
</dbReference>
<dbReference type="InterPro" id="IPR016082">
    <property type="entry name" value="Ribosomal_uL30_ferredoxin-like"/>
</dbReference>
<dbReference type="NCBIfam" id="TIGR01308">
    <property type="entry name" value="rpmD_bact"/>
    <property type="match status" value="1"/>
</dbReference>
<dbReference type="PANTHER" id="PTHR15892:SF2">
    <property type="entry name" value="LARGE RIBOSOMAL SUBUNIT PROTEIN UL30M"/>
    <property type="match status" value="1"/>
</dbReference>
<dbReference type="PANTHER" id="PTHR15892">
    <property type="entry name" value="MITOCHONDRIAL RIBOSOMAL PROTEIN L30"/>
    <property type="match status" value="1"/>
</dbReference>
<dbReference type="Pfam" id="PF00327">
    <property type="entry name" value="Ribosomal_L30"/>
    <property type="match status" value="1"/>
</dbReference>
<dbReference type="PIRSF" id="PIRSF002211">
    <property type="entry name" value="Ribosomal_L30_bac-type"/>
    <property type="match status" value="1"/>
</dbReference>
<dbReference type="SUPFAM" id="SSF55129">
    <property type="entry name" value="Ribosomal protein L30p/L7e"/>
    <property type="match status" value="1"/>
</dbReference>
<proteinExistence type="evidence at protein level"/>
<keyword id="KW-0002">3D-structure</keyword>
<keyword id="KW-0687">Ribonucleoprotein</keyword>
<keyword id="KW-0689">Ribosomal protein</keyword>
<accession>Q6A6P4</accession>
<comment type="subunit">
    <text evidence="1">Part of the 50S ribosomal subunit.</text>
</comment>
<comment type="similarity">
    <text evidence="1">Belongs to the universal ribosomal protein uL30 family.</text>
</comment>
<name>RL30_CUTAK</name>
<gene>
    <name evidence="1" type="primary">rpmD</name>
    <name type="ordered locus">PPA1843</name>
</gene>
<organism>
    <name type="scientific">Cutibacterium acnes (strain DSM 16379 / KPA171202)</name>
    <name type="common">Propionibacterium acnes</name>
    <dbReference type="NCBI Taxonomy" id="267747"/>
    <lineage>
        <taxon>Bacteria</taxon>
        <taxon>Bacillati</taxon>
        <taxon>Actinomycetota</taxon>
        <taxon>Actinomycetes</taxon>
        <taxon>Propionibacteriales</taxon>
        <taxon>Propionibacteriaceae</taxon>
        <taxon>Cutibacterium</taxon>
    </lineage>
</organism>
<evidence type="ECO:0000255" key="1">
    <source>
        <dbReference type="HAMAP-Rule" id="MF_01371"/>
    </source>
</evidence>
<evidence type="ECO:0000305" key="2"/>
<evidence type="ECO:0007829" key="3">
    <source>
        <dbReference type="PDB" id="8CVM"/>
    </source>
</evidence>
<sequence>MSKLKITQIKSGIATKPNHRETLRSLGLKRIGDTVIKEDRPEFRGMVRTVRHLVTMEEVD</sequence>
<feature type="chain" id="PRO_0000273823" description="Large ribosomal subunit protein uL30">
    <location>
        <begin position="1"/>
        <end position="60"/>
    </location>
</feature>
<feature type="strand" evidence="3">
    <location>
        <begin position="4"/>
        <end position="8"/>
    </location>
</feature>
<feature type="helix" evidence="3">
    <location>
        <begin position="17"/>
        <end position="26"/>
    </location>
</feature>
<feature type="strand" evidence="3">
    <location>
        <begin position="34"/>
        <end position="37"/>
    </location>
</feature>
<feature type="helix" evidence="3">
    <location>
        <begin position="41"/>
        <end position="49"/>
    </location>
</feature>
<feature type="turn" evidence="3">
    <location>
        <begin position="50"/>
        <end position="53"/>
    </location>
</feature>
<feature type="strand" evidence="3">
    <location>
        <begin position="54"/>
        <end position="57"/>
    </location>
</feature>
<protein>
    <recommendedName>
        <fullName evidence="1">Large ribosomal subunit protein uL30</fullName>
    </recommendedName>
    <alternativeName>
        <fullName evidence="2">50S ribosomal protein L30</fullName>
    </alternativeName>
</protein>
<reference key="1">
    <citation type="journal article" date="2004" name="Science">
        <title>The complete genome sequence of Propionibacterium acnes, a commensal of human skin.</title>
        <authorList>
            <person name="Brueggemann H."/>
            <person name="Henne A."/>
            <person name="Hoster F."/>
            <person name="Liesegang H."/>
            <person name="Wiezer A."/>
            <person name="Strittmatter A."/>
            <person name="Hujer S."/>
            <person name="Duerre P."/>
            <person name="Gottschalk G."/>
        </authorList>
    </citation>
    <scope>NUCLEOTIDE SEQUENCE [LARGE SCALE GENOMIC DNA]</scope>
    <source>
        <strain>DSM 16379 / KPA171202</strain>
    </source>
</reference>